<keyword id="KW-0002">3D-structure</keyword>
<keyword id="KW-0067">ATP-binding</keyword>
<keyword id="KW-0903">Direct protein sequencing</keyword>
<keyword id="KW-0520">NAD</keyword>
<keyword id="KW-0547">Nucleotide-binding</keyword>
<keyword id="KW-0548">Nucleotidyltransferase</keyword>
<keyword id="KW-0662">Pyridine nucleotide biosynthesis</keyword>
<keyword id="KW-1185">Reference proteome</keyword>
<keyword id="KW-0808">Transferase</keyword>
<reference key="1">
    <citation type="journal article" date="1998" name="Nature">
        <title>Deciphering the biology of Mycobacterium tuberculosis from the complete genome sequence.</title>
        <authorList>
            <person name="Cole S.T."/>
            <person name="Brosch R."/>
            <person name="Parkhill J."/>
            <person name="Garnier T."/>
            <person name="Churcher C.M."/>
            <person name="Harris D.E."/>
            <person name="Gordon S.V."/>
            <person name="Eiglmeier K."/>
            <person name="Gas S."/>
            <person name="Barry C.E. III"/>
            <person name="Tekaia F."/>
            <person name="Badcock K."/>
            <person name="Basham D."/>
            <person name="Brown D."/>
            <person name="Chillingworth T."/>
            <person name="Connor R."/>
            <person name="Davies R.M."/>
            <person name="Devlin K."/>
            <person name="Feltwell T."/>
            <person name="Gentles S."/>
            <person name="Hamlin N."/>
            <person name="Holroyd S."/>
            <person name="Hornsby T."/>
            <person name="Jagels K."/>
            <person name="Krogh A."/>
            <person name="McLean J."/>
            <person name="Moule S."/>
            <person name="Murphy L.D."/>
            <person name="Oliver S."/>
            <person name="Osborne J."/>
            <person name="Quail M.A."/>
            <person name="Rajandream M.A."/>
            <person name="Rogers J."/>
            <person name="Rutter S."/>
            <person name="Seeger K."/>
            <person name="Skelton S."/>
            <person name="Squares S."/>
            <person name="Squares R."/>
            <person name="Sulston J.E."/>
            <person name="Taylor K."/>
            <person name="Whitehead S."/>
            <person name="Barrell B.G."/>
        </authorList>
    </citation>
    <scope>NUCLEOTIDE SEQUENCE [LARGE SCALE GENOMIC DNA]</scope>
    <source>
        <strain>ATCC 25618 / H37Rv</strain>
    </source>
</reference>
<reference key="2">
    <citation type="journal article" date="2022" name="Genomics">
        <title>Deep N-terminomics of Mycobacterium tuberculosis H37Rv extensively correct annotated encoding genes.</title>
        <authorList>
            <person name="Shi J."/>
            <person name="Meng S."/>
            <person name="Wan L."/>
            <person name="Zhang Z."/>
            <person name="Jiang S."/>
            <person name="Zhu H."/>
            <person name="Dai E."/>
            <person name="Chang L."/>
            <person name="Gao H."/>
            <person name="Wan K."/>
            <person name="Zhang L."/>
            <person name="Zhao X."/>
            <person name="Liu H."/>
            <person name="Lyu Z."/>
            <person name="Zhang Y."/>
            <person name="Xu P."/>
        </authorList>
    </citation>
    <scope>PROTEIN SEQUENCE OF 1-42</scope>
    <scope>SEQUENCE REVISION TO N-TERMINUS</scope>
    <source>
        <strain>H37Rv</strain>
    </source>
</reference>
<reference key="3">
    <citation type="journal article" date="2011" name="Mol. Cell. Proteomics">
        <title>Proteogenomic analysis of Mycobacterium tuberculosis by high resolution mass spectrometry.</title>
        <authorList>
            <person name="Kelkar D.S."/>
            <person name="Kumar D."/>
            <person name="Kumar P."/>
            <person name="Balakrishnan L."/>
            <person name="Muthusamy B."/>
            <person name="Yadav A.K."/>
            <person name="Shrivastava P."/>
            <person name="Marimuthu A."/>
            <person name="Anand S."/>
            <person name="Sundaram H."/>
            <person name="Kingsbury R."/>
            <person name="Harsha H.C."/>
            <person name="Nair B."/>
            <person name="Prasad T.S."/>
            <person name="Chauhan D.S."/>
            <person name="Katoch K."/>
            <person name="Katoch V.M."/>
            <person name="Kumar P."/>
            <person name="Chaerkady R."/>
            <person name="Ramachandran S."/>
            <person name="Dash D."/>
            <person name="Pandey A."/>
        </authorList>
    </citation>
    <scope>IDENTIFICATION BY MASS SPECTROMETRY [LARGE SCALE ANALYSIS]</scope>
    <source>
        <strain>ATCC 25618 / H37Rv</strain>
    </source>
</reference>
<feature type="chain" id="PRO_0000181427" description="Probable nicotinate-nucleotide adenylyltransferase">
    <location>
        <begin position="1"/>
        <end position="214"/>
    </location>
</feature>
<feature type="strand" evidence="5">
    <location>
        <begin position="1"/>
        <end position="6"/>
    </location>
</feature>
<feature type="helix" evidence="5">
    <location>
        <begin position="13"/>
        <end position="25"/>
    </location>
</feature>
<feature type="strand" evidence="5">
    <location>
        <begin position="29"/>
        <end position="35"/>
    </location>
</feature>
<feature type="strand" evidence="6">
    <location>
        <begin position="40"/>
        <end position="42"/>
    </location>
</feature>
<feature type="helix" evidence="5">
    <location>
        <begin position="49"/>
        <end position="60"/>
    </location>
</feature>
<feature type="strand" evidence="5">
    <location>
        <begin position="66"/>
        <end position="68"/>
    </location>
</feature>
<feature type="helix" evidence="5">
    <location>
        <begin position="71"/>
        <end position="75"/>
    </location>
</feature>
<feature type="strand" evidence="4">
    <location>
        <begin position="76"/>
        <end position="78"/>
    </location>
</feature>
<feature type="helix" evidence="5">
    <location>
        <begin position="81"/>
        <end position="91"/>
    </location>
</feature>
<feature type="strand" evidence="5">
    <location>
        <begin position="95"/>
        <end position="102"/>
    </location>
</feature>
<feature type="helix" evidence="5">
    <location>
        <begin position="103"/>
        <end position="112"/>
    </location>
</feature>
<feature type="helix" evidence="5">
    <location>
        <begin position="115"/>
        <end position="121"/>
    </location>
</feature>
<feature type="strand" evidence="5">
    <location>
        <begin position="123"/>
        <end position="129"/>
    </location>
</feature>
<feature type="helix" evidence="5">
    <location>
        <begin position="132"/>
        <end position="135"/>
    </location>
</feature>
<feature type="helix" evidence="5">
    <location>
        <begin position="137"/>
        <end position="147"/>
    </location>
</feature>
<feature type="helix" evidence="5">
    <location>
        <begin position="148"/>
        <end position="150"/>
    </location>
</feature>
<feature type="strand" evidence="5">
    <location>
        <begin position="151"/>
        <end position="155"/>
    </location>
</feature>
<feature type="helix" evidence="5">
    <location>
        <begin position="157"/>
        <end position="160"/>
    </location>
</feature>
<feature type="helix" evidence="5">
    <location>
        <begin position="163"/>
        <end position="171"/>
    </location>
</feature>
<feature type="helix" evidence="5">
    <location>
        <begin position="182"/>
        <end position="190"/>
    </location>
</feature>
<feature type="turn" evidence="5">
    <location>
        <begin position="191"/>
        <end position="194"/>
    </location>
</feature>
<name>NADD_MYCTU</name>
<accession>P9WJJ5</accession>
<accession>L0TCA5</accession>
<accession>O86328</accession>
<protein>
    <recommendedName>
        <fullName evidence="1">Probable nicotinate-nucleotide adenylyltransferase</fullName>
        <ecNumber evidence="1">2.7.7.18</ecNumber>
    </recommendedName>
    <alternativeName>
        <fullName evidence="1">Deamido-NAD(+) diphosphorylase</fullName>
    </alternativeName>
    <alternativeName>
        <fullName evidence="1">Deamido-NAD(+) pyrophosphorylase</fullName>
    </alternativeName>
    <alternativeName>
        <fullName evidence="1">Nicotinate mononucleotide adenylyltransferase</fullName>
        <shortName evidence="1">NaMN adenylyltransferase</shortName>
    </alternativeName>
</protein>
<gene>
    <name evidence="1" type="primary">nadD</name>
    <name type="ordered locus">Rv2421c</name>
    <name type="ORF">MTCY428.26</name>
</gene>
<evidence type="ECO:0000255" key="1">
    <source>
        <dbReference type="HAMAP-Rule" id="MF_00244"/>
    </source>
</evidence>
<evidence type="ECO:0000269" key="2">
    <source>
    </source>
</evidence>
<evidence type="ECO:0000305" key="3"/>
<evidence type="ECO:0007829" key="4">
    <source>
        <dbReference type="PDB" id="4S1O"/>
    </source>
</evidence>
<evidence type="ECO:0007829" key="5">
    <source>
        <dbReference type="PDB" id="4YBR"/>
    </source>
</evidence>
<evidence type="ECO:0007829" key="6">
    <source>
        <dbReference type="PDB" id="6BUV"/>
    </source>
</evidence>
<proteinExistence type="evidence at protein level"/>
<comment type="function">
    <text evidence="1">Catalyzes the reversible adenylation of nicotinate mononucleotide (NaMN) to nicotinic acid adenine dinucleotide (NaAD).</text>
</comment>
<comment type="catalytic activity">
    <reaction evidence="1">
        <text>nicotinate beta-D-ribonucleotide + ATP + H(+) = deamido-NAD(+) + diphosphate</text>
        <dbReference type="Rhea" id="RHEA:22860"/>
        <dbReference type="ChEBI" id="CHEBI:15378"/>
        <dbReference type="ChEBI" id="CHEBI:30616"/>
        <dbReference type="ChEBI" id="CHEBI:33019"/>
        <dbReference type="ChEBI" id="CHEBI:57502"/>
        <dbReference type="ChEBI" id="CHEBI:58437"/>
        <dbReference type="EC" id="2.7.7.18"/>
    </reaction>
</comment>
<comment type="pathway">
    <text evidence="1">Cofactor biosynthesis; NAD(+) biosynthesis; deamido-NAD(+) from nicotinate D-ribonucleotide: step 1/1.</text>
</comment>
<comment type="similarity">
    <text evidence="1 3">Belongs to the NadD family.</text>
</comment>
<comment type="sequence caution" evidence="2">
    <conflict type="erroneous initiation">
        <sequence resource="EMBL-CDS" id="CCP45212"/>
    </conflict>
    <text>Truncated N-terminus.</text>
</comment>
<organism>
    <name type="scientific">Mycobacterium tuberculosis (strain ATCC 25618 / H37Rv)</name>
    <dbReference type="NCBI Taxonomy" id="83332"/>
    <lineage>
        <taxon>Bacteria</taxon>
        <taxon>Bacillati</taxon>
        <taxon>Actinomycetota</taxon>
        <taxon>Actinomycetes</taxon>
        <taxon>Mycobacteriales</taxon>
        <taxon>Mycobacteriaceae</taxon>
        <taxon>Mycobacterium</taxon>
        <taxon>Mycobacterium tuberculosis complex</taxon>
    </lineage>
</organism>
<dbReference type="EC" id="2.7.7.18" evidence="1"/>
<dbReference type="EMBL" id="AL123456">
    <property type="protein sequence ID" value="CCP45212.1"/>
    <property type="status" value="ALT_INIT"/>
    <property type="molecule type" value="Genomic_DNA"/>
</dbReference>
<dbReference type="PIR" id="H70685">
    <property type="entry name" value="H70685"/>
</dbReference>
<dbReference type="RefSeq" id="NP_216937.1">
    <property type="nucleotide sequence ID" value="NC_000962.3"/>
</dbReference>
<dbReference type="RefSeq" id="WP_003412398.1">
    <property type="nucleotide sequence ID" value="NC_000962.3"/>
</dbReference>
<dbReference type="PDB" id="4RPI">
    <property type="method" value="X-ray"/>
    <property type="resolution" value="2.42 A"/>
    <property type="chains" value="A/B/C/D=4-214"/>
</dbReference>
<dbReference type="PDB" id="4S1O">
    <property type="method" value="X-ray"/>
    <property type="resolution" value="1.84 A"/>
    <property type="chains" value="A/B=4-195"/>
</dbReference>
<dbReference type="PDB" id="4X0E">
    <property type="method" value="X-ray"/>
    <property type="resolution" value="2.41 A"/>
    <property type="chains" value="A/B=4-214"/>
</dbReference>
<dbReference type="PDB" id="4YBR">
    <property type="method" value="X-ray"/>
    <property type="resolution" value="1.65 A"/>
    <property type="chains" value="A/B=4-195"/>
</dbReference>
<dbReference type="PDB" id="5DAS">
    <property type="method" value="X-ray"/>
    <property type="resolution" value="2.20 A"/>
    <property type="chains" value="A/B/C/D=4-195"/>
</dbReference>
<dbReference type="PDB" id="6BUV">
    <property type="method" value="X-ray"/>
    <property type="resolution" value="1.86 A"/>
    <property type="chains" value="A/B=4-195"/>
</dbReference>
<dbReference type="PDBsum" id="4RPI"/>
<dbReference type="PDBsum" id="4S1O"/>
<dbReference type="PDBsum" id="4X0E"/>
<dbReference type="PDBsum" id="4YBR"/>
<dbReference type="PDBsum" id="5DAS"/>
<dbReference type="PDBsum" id="6BUV"/>
<dbReference type="SMR" id="P9WJJ5"/>
<dbReference type="FunCoup" id="P9WJJ5">
    <property type="interactions" value="178"/>
</dbReference>
<dbReference type="STRING" id="83332.Rv2421c"/>
<dbReference type="PaxDb" id="83332-Rv2421c"/>
<dbReference type="DNASU" id="885457"/>
<dbReference type="GeneID" id="885457"/>
<dbReference type="KEGG" id="mtu:Rv2421c"/>
<dbReference type="TubercuList" id="Rv2421c"/>
<dbReference type="eggNOG" id="COG1057">
    <property type="taxonomic scope" value="Bacteria"/>
</dbReference>
<dbReference type="InParanoid" id="P9WJJ5"/>
<dbReference type="OrthoDB" id="5295945at2"/>
<dbReference type="PhylomeDB" id="P9WJJ5"/>
<dbReference type="BRENDA" id="2.7.7.18">
    <property type="organism ID" value="3445"/>
</dbReference>
<dbReference type="UniPathway" id="UPA00253">
    <property type="reaction ID" value="UER00332"/>
</dbReference>
<dbReference type="EvolutionaryTrace" id="P9WJJ5"/>
<dbReference type="Proteomes" id="UP000001584">
    <property type="component" value="Chromosome"/>
</dbReference>
<dbReference type="GO" id="GO:0005524">
    <property type="term" value="F:ATP binding"/>
    <property type="evidence" value="ECO:0007669"/>
    <property type="project" value="UniProtKB-KW"/>
</dbReference>
<dbReference type="GO" id="GO:0000309">
    <property type="term" value="F:nicotinamide-nucleotide adenylyltransferase activity"/>
    <property type="evidence" value="ECO:0000318"/>
    <property type="project" value="GO_Central"/>
</dbReference>
<dbReference type="GO" id="GO:0004515">
    <property type="term" value="F:nicotinate-nucleotide adenylyltransferase activity"/>
    <property type="evidence" value="ECO:0000318"/>
    <property type="project" value="GO_Central"/>
</dbReference>
<dbReference type="GO" id="GO:0009435">
    <property type="term" value="P:NAD biosynthetic process"/>
    <property type="evidence" value="ECO:0000318"/>
    <property type="project" value="GO_Central"/>
</dbReference>
<dbReference type="CDD" id="cd02165">
    <property type="entry name" value="NMNAT"/>
    <property type="match status" value="1"/>
</dbReference>
<dbReference type="FunFam" id="3.40.50.620:FF:000039">
    <property type="entry name" value="Probable nicotinate-nucleotide adenylyltransferase"/>
    <property type="match status" value="1"/>
</dbReference>
<dbReference type="Gene3D" id="3.40.50.620">
    <property type="entry name" value="HUPs"/>
    <property type="match status" value="1"/>
</dbReference>
<dbReference type="HAMAP" id="MF_00244">
    <property type="entry name" value="NaMN_adenylyltr"/>
    <property type="match status" value="1"/>
</dbReference>
<dbReference type="InterPro" id="IPR004821">
    <property type="entry name" value="Cyt_trans-like"/>
</dbReference>
<dbReference type="InterPro" id="IPR005248">
    <property type="entry name" value="NadD/NMNAT"/>
</dbReference>
<dbReference type="InterPro" id="IPR014729">
    <property type="entry name" value="Rossmann-like_a/b/a_fold"/>
</dbReference>
<dbReference type="NCBIfam" id="TIGR00125">
    <property type="entry name" value="cyt_tran_rel"/>
    <property type="match status" value="1"/>
</dbReference>
<dbReference type="NCBIfam" id="TIGR00482">
    <property type="entry name" value="nicotinate (nicotinamide) nucleotide adenylyltransferase"/>
    <property type="match status" value="1"/>
</dbReference>
<dbReference type="NCBIfam" id="NF000840">
    <property type="entry name" value="PRK00071.1-3"/>
    <property type="match status" value="1"/>
</dbReference>
<dbReference type="PANTHER" id="PTHR39321">
    <property type="entry name" value="NICOTINATE-NUCLEOTIDE ADENYLYLTRANSFERASE-RELATED"/>
    <property type="match status" value="1"/>
</dbReference>
<dbReference type="PANTHER" id="PTHR39321:SF3">
    <property type="entry name" value="PHOSPHOPANTETHEINE ADENYLYLTRANSFERASE"/>
    <property type="match status" value="1"/>
</dbReference>
<dbReference type="Pfam" id="PF01467">
    <property type="entry name" value="CTP_transf_like"/>
    <property type="match status" value="1"/>
</dbReference>
<dbReference type="SUPFAM" id="SSF52374">
    <property type="entry name" value="Nucleotidylyl transferase"/>
    <property type="match status" value="1"/>
</dbReference>
<sequence>MGVMGGTFDPIHYGHLVAASEVADLFDLDEVVFVPSGQPWQKGRQVSAAEHRYLMTVIATASNPRFSVSRVDIDRGGPTYTKDTLADLHALHPDSELYFTTGADALASIMSWQGWEELFELARFVGVSRPGYELRNEHITSLLGQLAKDALTLVEIPALAISSTDCRQRAEQSRPLWYLMPDGVVQYVSKCRLYCGACDAGARSTTSLAAGNGL</sequence>